<keyword id="KW-0004">4Fe-4S</keyword>
<keyword id="KW-0408">Iron</keyword>
<keyword id="KW-0411">Iron-sulfur</keyword>
<keyword id="KW-0456">Lyase</keyword>
<keyword id="KW-0479">Metal-binding</keyword>
<keyword id="KW-0949">S-adenosyl-L-methionine</keyword>
<keyword id="KW-0784">Thiamine biosynthesis</keyword>
<keyword id="KW-0862">Zinc</keyword>
<reference key="1">
    <citation type="journal article" date="2006" name="PLoS Biol.">
        <title>The genome of deep-sea vent chemolithoautotroph Thiomicrospira crunogena XCL-2.</title>
        <authorList>
            <person name="Scott K.M."/>
            <person name="Sievert S.M."/>
            <person name="Abril F.N."/>
            <person name="Ball L.A."/>
            <person name="Barrett C.J."/>
            <person name="Blake R.A."/>
            <person name="Boller A.J."/>
            <person name="Chain P.S.G."/>
            <person name="Clark J.A."/>
            <person name="Davis C.R."/>
            <person name="Detter C."/>
            <person name="Do K.F."/>
            <person name="Dobrinski K.P."/>
            <person name="Faza B.I."/>
            <person name="Fitzpatrick K.A."/>
            <person name="Freyermuth S.K."/>
            <person name="Harmer T.L."/>
            <person name="Hauser L.J."/>
            <person name="Huegler M."/>
            <person name="Kerfeld C.A."/>
            <person name="Klotz M.G."/>
            <person name="Kong W.W."/>
            <person name="Land M."/>
            <person name="Lapidus A."/>
            <person name="Larimer F.W."/>
            <person name="Longo D.L."/>
            <person name="Lucas S."/>
            <person name="Malfatti S.A."/>
            <person name="Massey S.E."/>
            <person name="Martin D.D."/>
            <person name="McCuddin Z."/>
            <person name="Meyer F."/>
            <person name="Moore J.L."/>
            <person name="Ocampo L.H. Jr."/>
            <person name="Paul J.H."/>
            <person name="Paulsen I.T."/>
            <person name="Reep D.K."/>
            <person name="Ren Q."/>
            <person name="Ross R.L."/>
            <person name="Sato P.Y."/>
            <person name="Thomas P."/>
            <person name="Tinkham L.E."/>
            <person name="Zeruth G.T."/>
        </authorList>
    </citation>
    <scope>NUCLEOTIDE SEQUENCE [LARGE SCALE GENOMIC DNA]</scope>
    <source>
        <strain>DSM 25203 / XCL-2</strain>
    </source>
</reference>
<evidence type="ECO:0000255" key="1">
    <source>
        <dbReference type="HAMAP-Rule" id="MF_00089"/>
    </source>
</evidence>
<comment type="function">
    <text evidence="1">Catalyzes the synthesis of the hydroxymethylpyrimidine phosphate (HMP-P) moiety of thiamine from aminoimidazole ribotide (AIR) in a radical S-adenosyl-L-methionine (SAM)-dependent reaction.</text>
</comment>
<comment type="catalytic activity">
    <reaction evidence="1">
        <text>5-amino-1-(5-phospho-beta-D-ribosyl)imidazole + S-adenosyl-L-methionine = 4-amino-2-methyl-5-(phosphooxymethyl)pyrimidine + CO + 5'-deoxyadenosine + formate + L-methionine + 3 H(+)</text>
        <dbReference type="Rhea" id="RHEA:24840"/>
        <dbReference type="ChEBI" id="CHEBI:15378"/>
        <dbReference type="ChEBI" id="CHEBI:15740"/>
        <dbReference type="ChEBI" id="CHEBI:17245"/>
        <dbReference type="ChEBI" id="CHEBI:17319"/>
        <dbReference type="ChEBI" id="CHEBI:57844"/>
        <dbReference type="ChEBI" id="CHEBI:58354"/>
        <dbReference type="ChEBI" id="CHEBI:59789"/>
        <dbReference type="ChEBI" id="CHEBI:137981"/>
        <dbReference type="EC" id="4.1.99.17"/>
    </reaction>
</comment>
<comment type="cofactor">
    <cofactor evidence="1">
        <name>[4Fe-4S] cluster</name>
        <dbReference type="ChEBI" id="CHEBI:49883"/>
    </cofactor>
    <text evidence="1">Binds 1 [4Fe-4S] cluster per subunit. The cluster is coordinated with 3 cysteines and an exchangeable S-adenosyl-L-methionine.</text>
</comment>
<comment type="pathway">
    <text evidence="1">Cofactor biosynthesis; thiamine diphosphate biosynthesis.</text>
</comment>
<comment type="subunit">
    <text evidence="1">Homodimer.</text>
</comment>
<comment type="similarity">
    <text evidence="1">Belongs to the ThiC family.</text>
</comment>
<organism>
    <name type="scientific">Hydrogenovibrio crunogenus (strain DSM 25203 / XCL-2)</name>
    <name type="common">Thiomicrospira crunogena</name>
    <dbReference type="NCBI Taxonomy" id="317025"/>
    <lineage>
        <taxon>Bacteria</taxon>
        <taxon>Pseudomonadati</taxon>
        <taxon>Pseudomonadota</taxon>
        <taxon>Gammaproteobacteria</taxon>
        <taxon>Thiotrichales</taxon>
        <taxon>Piscirickettsiaceae</taxon>
        <taxon>Hydrogenovibrio</taxon>
    </lineage>
</organism>
<protein>
    <recommendedName>
        <fullName evidence="1">Phosphomethylpyrimidine synthase</fullName>
        <ecNumber evidence="1">4.1.99.17</ecNumber>
    </recommendedName>
    <alternativeName>
        <fullName evidence="1">Hydroxymethylpyrimidine phosphate synthase</fullName>
        <shortName evidence="1">HMP-P synthase</shortName>
        <shortName evidence="1">HMP-phosphate synthase</shortName>
        <shortName evidence="1">HMPP synthase</shortName>
    </alternativeName>
    <alternativeName>
        <fullName evidence="1">Thiamine biosynthesis protein ThiC</fullName>
    </alternativeName>
</protein>
<proteinExistence type="inferred from homology"/>
<dbReference type="EC" id="4.1.99.17" evidence="1"/>
<dbReference type="EMBL" id="CP000109">
    <property type="protein sequence ID" value="ABB40744.1"/>
    <property type="molecule type" value="Genomic_DNA"/>
</dbReference>
<dbReference type="SMR" id="Q31JC9"/>
<dbReference type="STRING" id="317025.Tcr_0148"/>
<dbReference type="KEGG" id="tcx:Tcr_0148"/>
<dbReference type="eggNOG" id="COG0422">
    <property type="taxonomic scope" value="Bacteria"/>
</dbReference>
<dbReference type="HOGENOM" id="CLU_013181_2_1_6"/>
<dbReference type="OrthoDB" id="9805897at2"/>
<dbReference type="UniPathway" id="UPA00060"/>
<dbReference type="GO" id="GO:0005829">
    <property type="term" value="C:cytosol"/>
    <property type="evidence" value="ECO:0007669"/>
    <property type="project" value="TreeGrafter"/>
</dbReference>
<dbReference type="GO" id="GO:0051539">
    <property type="term" value="F:4 iron, 4 sulfur cluster binding"/>
    <property type="evidence" value="ECO:0007669"/>
    <property type="project" value="UniProtKB-KW"/>
</dbReference>
<dbReference type="GO" id="GO:0016830">
    <property type="term" value="F:carbon-carbon lyase activity"/>
    <property type="evidence" value="ECO:0007669"/>
    <property type="project" value="InterPro"/>
</dbReference>
<dbReference type="GO" id="GO:0008270">
    <property type="term" value="F:zinc ion binding"/>
    <property type="evidence" value="ECO:0007669"/>
    <property type="project" value="UniProtKB-UniRule"/>
</dbReference>
<dbReference type="GO" id="GO:0009228">
    <property type="term" value="P:thiamine biosynthetic process"/>
    <property type="evidence" value="ECO:0007669"/>
    <property type="project" value="UniProtKB-KW"/>
</dbReference>
<dbReference type="GO" id="GO:0009229">
    <property type="term" value="P:thiamine diphosphate biosynthetic process"/>
    <property type="evidence" value="ECO:0007669"/>
    <property type="project" value="UniProtKB-UniRule"/>
</dbReference>
<dbReference type="FunFam" id="3.20.20.540:FF:000001">
    <property type="entry name" value="Phosphomethylpyrimidine synthase"/>
    <property type="match status" value="1"/>
</dbReference>
<dbReference type="Gene3D" id="6.10.250.620">
    <property type="match status" value="1"/>
</dbReference>
<dbReference type="Gene3D" id="3.20.20.540">
    <property type="entry name" value="Radical SAM ThiC family, central domain"/>
    <property type="match status" value="1"/>
</dbReference>
<dbReference type="HAMAP" id="MF_00089">
    <property type="entry name" value="ThiC"/>
    <property type="match status" value="1"/>
</dbReference>
<dbReference type="InterPro" id="IPR037509">
    <property type="entry name" value="ThiC"/>
</dbReference>
<dbReference type="InterPro" id="IPR025747">
    <property type="entry name" value="ThiC-associated_dom"/>
</dbReference>
<dbReference type="InterPro" id="IPR038521">
    <property type="entry name" value="ThiC/Bza_core_dom"/>
</dbReference>
<dbReference type="InterPro" id="IPR002817">
    <property type="entry name" value="ThiC/BzaA/B"/>
</dbReference>
<dbReference type="NCBIfam" id="NF006763">
    <property type="entry name" value="PRK09284.1"/>
    <property type="match status" value="1"/>
</dbReference>
<dbReference type="NCBIfam" id="NF009895">
    <property type="entry name" value="PRK13352.1"/>
    <property type="match status" value="1"/>
</dbReference>
<dbReference type="NCBIfam" id="TIGR00190">
    <property type="entry name" value="thiC"/>
    <property type="match status" value="1"/>
</dbReference>
<dbReference type="PANTHER" id="PTHR30557:SF1">
    <property type="entry name" value="PHOSPHOMETHYLPYRIMIDINE SYNTHASE, CHLOROPLASTIC"/>
    <property type="match status" value="1"/>
</dbReference>
<dbReference type="PANTHER" id="PTHR30557">
    <property type="entry name" value="THIAMINE BIOSYNTHESIS PROTEIN THIC"/>
    <property type="match status" value="1"/>
</dbReference>
<dbReference type="Pfam" id="PF13667">
    <property type="entry name" value="ThiC-associated"/>
    <property type="match status" value="1"/>
</dbReference>
<dbReference type="Pfam" id="PF01964">
    <property type="entry name" value="ThiC_Rad_SAM"/>
    <property type="match status" value="1"/>
</dbReference>
<dbReference type="SFLD" id="SFLDF00407">
    <property type="entry name" value="phosphomethylpyrimidine_syntha"/>
    <property type="match status" value="1"/>
</dbReference>
<dbReference type="SFLD" id="SFLDG01114">
    <property type="entry name" value="phosphomethylpyrimidine_syntha"/>
    <property type="match status" value="1"/>
</dbReference>
<dbReference type="SFLD" id="SFLDS00113">
    <property type="entry name" value="Radical_SAM_Phosphomethylpyrim"/>
    <property type="match status" value="1"/>
</dbReference>
<sequence>MSTFKNALPASNDILTRDPLPASHKTYISGEIHPEIKVPMRAITLTNGETVTVYDTSGPYTDPNIEIDVAQGIPTVRKDWIANRNDVEAYEGRIIDPKDNGYKNRTQMETAIAGASSLMRQPLRAKAGQNVTQLHYARQGIITPEMEFIAIRENQRRDMTRRYLNDPEREARLKGENFGANLLEDITPEFVRKEVAEGRAVIPANINHPESEPMIIGRNFLVKVNANIGNSATTSSIGEEVEKMVWATRWGADTVMDLSTGQNIHTTRDWILRNAPVPIGTVPIYQALEKVNGVAEDLTWEIFRDTLIEQAEQGVDYFTIHAGVLLRYVPMTAKRVTGIVSRGGSIMAKWCIAHHKENFLYTHFEDICEILKQYDVSFSLGDGLRPGSVADANDEAQISELKTLGELTQIAWKHDVQVIIEGPGHVPMHMIKENMDKQLEYCHEAPFYTLGPLTTDIAPGYDHITSGIGAAMIGWFGTAMLCYVTPKEHLGLPNRDDVKEGLITYKLAAHAADIAKGHPGARSRDDALSQARFEFRWEDQFNLGLDPEKARAFHDETLPRDSAKVAHFCSMCGPKFCSMKISQEVRDYADKQGLSTEDAVNKGMEEMSQTFKNQGSEVYVNVEDITKTGS</sequence>
<name>THIC_HYDCU</name>
<feature type="chain" id="PRO_0000242315" description="Phosphomethylpyrimidine synthase">
    <location>
        <begin position="1"/>
        <end position="630"/>
    </location>
</feature>
<feature type="binding site" evidence="1">
    <location>
        <position position="227"/>
    </location>
    <ligand>
        <name>substrate</name>
    </ligand>
</feature>
<feature type="binding site" evidence="1">
    <location>
        <position position="256"/>
    </location>
    <ligand>
        <name>substrate</name>
    </ligand>
</feature>
<feature type="binding site" evidence="1">
    <location>
        <position position="285"/>
    </location>
    <ligand>
        <name>substrate</name>
    </ligand>
</feature>
<feature type="binding site" evidence="1">
    <location>
        <position position="321"/>
    </location>
    <ligand>
        <name>substrate</name>
    </ligand>
</feature>
<feature type="binding site" evidence="1">
    <location>
        <begin position="341"/>
        <end position="343"/>
    </location>
    <ligand>
        <name>substrate</name>
    </ligand>
</feature>
<feature type="binding site" evidence="1">
    <location>
        <begin position="382"/>
        <end position="385"/>
    </location>
    <ligand>
        <name>substrate</name>
    </ligand>
</feature>
<feature type="binding site" evidence="1">
    <location>
        <position position="421"/>
    </location>
    <ligand>
        <name>substrate</name>
    </ligand>
</feature>
<feature type="binding site" evidence="1">
    <location>
        <position position="425"/>
    </location>
    <ligand>
        <name>Zn(2+)</name>
        <dbReference type="ChEBI" id="CHEBI:29105"/>
    </ligand>
</feature>
<feature type="binding site" evidence="1">
    <location>
        <position position="448"/>
    </location>
    <ligand>
        <name>substrate</name>
    </ligand>
</feature>
<feature type="binding site" evidence="1">
    <location>
        <position position="489"/>
    </location>
    <ligand>
        <name>Zn(2+)</name>
        <dbReference type="ChEBI" id="CHEBI:29105"/>
    </ligand>
</feature>
<feature type="binding site" evidence="1">
    <location>
        <position position="569"/>
    </location>
    <ligand>
        <name>[4Fe-4S] cluster</name>
        <dbReference type="ChEBI" id="CHEBI:49883"/>
        <note>4Fe-4S-S-AdoMet</note>
    </ligand>
</feature>
<feature type="binding site" evidence="1">
    <location>
        <position position="572"/>
    </location>
    <ligand>
        <name>[4Fe-4S] cluster</name>
        <dbReference type="ChEBI" id="CHEBI:49883"/>
        <note>4Fe-4S-S-AdoMet</note>
    </ligand>
</feature>
<feature type="binding site" evidence="1">
    <location>
        <position position="577"/>
    </location>
    <ligand>
        <name>[4Fe-4S] cluster</name>
        <dbReference type="ChEBI" id="CHEBI:49883"/>
        <note>4Fe-4S-S-AdoMet</note>
    </ligand>
</feature>
<gene>
    <name evidence="1" type="primary">thiC</name>
    <name type="ordered locus">Tcr_0148</name>
</gene>
<accession>Q31JC9</accession>